<gene>
    <name type="primary">TPP1</name>
    <name type="synonym">CLN2</name>
</gene>
<name>TPP1_BOVIN</name>
<protein>
    <recommendedName>
        <fullName>Tripeptidyl-peptidase 1</fullName>
        <shortName>TPP-1</shortName>
        <ecNumber>3.4.14.9</ecNumber>
    </recommendedName>
    <alternativeName>
        <fullName>Tripeptidyl aminopeptidase</fullName>
    </alternativeName>
    <alternativeName>
        <fullName>Tripeptidyl-peptidase I</fullName>
        <shortName>TPP-I</shortName>
    </alternativeName>
</protein>
<sequence>MGPRSGLLGLFALFVAGKCSYSPEPDQQRRLPPGWVSLGRADPEEELSLTFALRQQNVKRLSELVQAVSDPGSPRYGKYLTLEDVAELVRPSPLTLHTVQKWLLAAGARNCHSVTTQDFLTCWLSVRQAELLLSGAEFHHYVGGPAETHAVRSLHPYRLPKALAPHVDFVGGLHRFPPTSTLRQHPEPQVPGTVGLHLGVTPSVIRKRYNLTAQDVGSGTTNNSQACAQFLEQYFHDSDLAEFMRLFGGDFAHQASVARVVGQQGRGRAGIEASLDVEYLMSAGANISTWVYSSPGRHESQEPFLQWLLLLSNESALPYVHTVSYGDDEDSLSSTYIQRVNTELMKAAARGLTLLFASGDSGAGCWSVSGRHQFRPSFPASSPYVTTVGGTSFQNPFRVTDEVVDYISGGGFSNVFPRPSYQEEAVTRYLSSSPHLPPSSYFNASGRAYPDVAALSDGYWVVSNHVPIPWVSGTSASTPVFGGLLSLINEHRILRGLPPLGFLNPRLYQKHGAGLFDVTRGCHESCLNEEVEGQGFCSGPGWDPVTGWGTPNFPALLKTLMNP</sequence>
<evidence type="ECO:0000250" key="1">
    <source>
        <dbReference type="UniProtKB" id="O14773"/>
    </source>
</evidence>
<evidence type="ECO:0000250" key="2">
    <source>
        <dbReference type="UniProtKB" id="Q9EQV6"/>
    </source>
</evidence>
<evidence type="ECO:0000255" key="3"/>
<reference key="1">
    <citation type="journal article" date="2005" name="BMC Genomics">
        <title>Characterization of 954 bovine full-CDS cDNA sequences.</title>
        <authorList>
            <person name="Harhay G.P."/>
            <person name="Sonstegard T.S."/>
            <person name="Keele J.W."/>
            <person name="Heaton M.P."/>
            <person name="Clawson M.L."/>
            <person name="Snelling W.M."/>
            <person name="Wiedmann R.T."/>
            <person name="Van Tassell C.P."/>
            <person name="Smith T.P.L."/>
        </authorList>
    </citation>
    <scope>NUCLEOTIDE SEQUENCE [LARGE SCALE MRNA]</scope>
</reference>
<reference key="2">
    <citation type="submission" date="2006-08" db="EMBL/GenBank/DDBJ databases">
        <authorList>
            <consortium name="NIH - Mammalian Gene Collection (MGC) project"/>
        </authorList>
    </citation>
    <scope>NUCLEOTIDE SEQUENCE [LARGE SCALE MRNA]</scope>
    <source>
        <strain>Hereford</strain>
        <tissue>Heart ventricle</tissue>
    </source>
</reference>
<dbReference type="EC" id="3.4.14.9"/>
<dbReference type="EMBL" id="BT026303">
    <property type="protein sequence ID" value="ABG81459.1"/>
    <property type="molecule type" value="mRNA"/>
</dbReference>
<dbReference type="EMBL" id="BC119827">
    <property type="protein sequence ID" value="AAI19828.1"/>
    <property type="molecule type" value="mRNA"/>
</dbReference>
<dbReference type="RefSeq" id="NP_001069186.1">
    <property type="nucleotide sequence ID" value="NM_001075718.1"/>
</dbReference>
<dbReference type="SMR" id="Q0V8B6"/>
<dbReference type="FunCoup" id="Q0V8B6">
    <property type="interactions" value="454"/>
</dbReference>
<dbReference type="STRING" id="9913.ENSBTAP00000062713"/>
<dbReference type="MEROPS" id="S53.003"/>
<dbReference type="GlyCosmos" id="Q0V8B6">
    <property type="glycosylation" value="5 sites, No reported glycans"/>
</dbReference>
<dbReference type="GlyGen" id="Q0V8B6">
    <property type="glycosylation" value="5 sites"/>
</dbReference>
<dbReference type="PaxDb" id="9913-ENSBTAP00000020469"/>
<dbReference type="PeptideAtlas" id="Q0V8B6"/>
<dbReference type="GeneID" id="515575"/>
<dbReference type="KEGG" id="bta:515575"/>
<dbReference type="CTD" id="1200"/>
<dbReference type="eggNOG" id="ENOG502QR6D">
    <property type="taxonomic scope" value="Eukaryota"/>
</dbReference>
<dbReference type="InParanoid" id="Q0V8B6"/>
<dbReference type="OrthoDB" id="2919105at2759"/>
<dbReference type="Proteomes" id="UP000009136">
    <property type="component" value="Unplaced"/>
</dbReference>
<dbReference type="GO" id="GO:0005794">
    <property type="term" value="C:Golgi apparatus"/>
    <property type="evidence" value="ECO:0000250"/>
    <property type="project" value="UniProtKB"/>
</dbReference>
<dbReference type="GO" id="GO:0005764">
    <property type="term" value="C:lysosome"/>
    <property type="evidence" value="ECO:0000250"/>
    <property type="project" value="UniProtKB"/>
</dbReference>
<dbReference type="GO" id="GO:0042470">
    <property type="term" value="C:melanosome"/>
    <property type="evidence" value="ECO:0007669"/>
    <property type="project" value="UniProtKB-SubCell"/>
</dbReference>
<dbReference type="GO" id="GO:0045121">
    <property type="term" value="C:membrane raft"/>
    <property type="evidence" value="ECO:0000250"/>
    <property type="project" value="UniProtKB"/>
</dbReference>
<dbReference type="GO" id="GO:0055037">
    <property type="term" value="C:recycling endosome"/>
    <property type="evidence" value="ECO:0000250"/>
    <property type="project" value="UniProtKB"/>
</dbReference>
<dbReference type="GO" id="GO:0004175">
    <property type="term" value="F:endopeptidase activity"/>
    <property type="evidence" value="ECO:0000250"/>
    <property type="project" value="UniProtKB"/>
</dbReference>
<dbReference type="GO" id="GO:0035727">
    <property type="term" value="F:lysophosphatidic acid binding"/>
    <property type="evidence" value="ECO:0000250"/>
    <property type="project" value="UniProtKB"/>
</dbReference>
<dbReference type="GO" id="GO:0046872">
    <property type="term" value="F:metal ion binding"/>
    <property type="evidence" value="ECO:0007669"/>
    <property type="project" value="UniProtKB-KW"/>
</dbReference>
<dbReference type="GO" id="GO:0004252">
    <property type="term" value="F:serine-type endopeptidase activity"/>
    <property type="evidence" value="ECO:0007669"/>
    <property type="project" value="InterPro"/>
</dbReference>
<dbReference type="GO" id="GO:0120146">
    <property type="term" value="F:sulfatide binding"/>
    <property type="evidence" value="ECO:0000250"/>
    <property type="project" value="UniProtKB"/>
</dbReference>
<dbReference type="GO" id="GO:0008240">
    <property type="term" value="F:tripeptidyl-peptidase activity"/>
    <property type="evidence" value="ECO:0000250"/>
    <property type="project" value="UniProtKB"/>
</dbReference>
<dbReference type="GO" id="GO:0045453">
    <property type="term" value="P:bone resorption"/>
    <property type="evidence" value="ECO:0000250"/>
    <property type="project" value="UniProtKB"/>
</dbReference>
<dbReference type="GO" id="GO:0007417">
    <property type="term" value="P:central nervous system development"/>
    <property type="evidence" value="ECO:0000318"/>
    <property type="project" value="GO_Central"/>
</dbReference>
<dbReference type="GO" id="GO:0007399">
    <property type="term" value="P:nervous system development"/>
    <property type="evidence" value="ECO:0000250"/>
    <property type="project" value="UniProtKB"/>
</dbReference>
<dbReference type="GO" id="GO:0043171">
    <property type="term" value="P:peptide catabolic process"/>
    <property type="evidence" value="ECO:0000250"/>
    <property type="project" value="UniProtKB"/>
</dbReference>
<dbReference type="GO" id="GO:0006508">
    <property type="term" value="P:proteolysis"/>
    <property type="evidence" value="ECO:0000250"/>
    <property type="project" value="UniProtKB"/>
</dbReference>
<dbReference type="CDD" id="cd04056">
    <property type="entry name" value="Peptidases_S53"/>
    <property type="match status" value="1"/>
</dbReference>
<dbReference type="CDD" id="cd11377">
    <property type="entry name" value="Pro-peptidase_S53"/>
    <property type="match status" value="1"/>
</dbReference>
<dbReference type="FunFam" id="3.40.50.200:FF:000012">
    <property type="entry name" value="Tripeptidyl-peptidase 1 preproprotein"/>
    <property type="match status" value="1"/>
</dbReference>
<dbReference type="Gene3D" id="3.40.50.200">
    <property type="entry name" value="Peptidase S8/S53 domain"/>
    <property type="match status" value="1"/>
</dbReference>
<dbReference type="InterPro" id="IPR000209">
    <property type="entry name" value="Peptidase_S8/S53_dom"/>
</dbReference>
<dbReference type="InterPro" id="IPR036852">
    <property type="entry name" value="Peptidase_S8/S53_dom_sf"/>
</dbReference>
<dbReference type="InterPro" id="IPR015366">
    <property type="entry name" value="S53_propep"/>
</dbReference>
<dbReference type="InterPro" id="IPR030400">
    <property type="entry name" value="Sedolisin_dom"/>
</dbReference>
<dbReference type="InterPro" id="IPR050819">
    <property type="entry name" value="Tripeptidyl-peptidase_I"/>
</dbReference>
<dbReference type="PANTHER" id="PTHR14218">
    <property type="entry name" value="PROTEASE S8 TRIPEPTIDYL PEPTIDASE I CLN2"/>
    <property type="match status" value="1"/>
</dbReference>
<dbReference type="PANTHER" id="PTHR14218:SF15">
    <property type="entry name" value="TRIPEPTIDYL-PEPTIDASE 1"/>
    <property type="match status" value="1"/>
</dbReference>
<dbReference type="Pfam" id="PF00082">
    <property type="entry name" value="Peptidase_S8"/>
    <property type="match status" value="1"/>
</dbReference>
<dbReference type="Pfam" id="PF09286">
    <property type="entry name" value="Pro-kuma_activ"/>
    <property type="match status" value="1"/>
</dbReference>
<dbReference type="SMART" id="SM00944">
    <property type="entry name" value="Pro-kuma_activ"/>
    <property type="match status" value="1"/>
</dbReference>
<dbReference type="SUPFAM" id="SSF54897">
    <property type="entry name" value="Protease propeptides/inhibitors"/>
    <property type="match status" value="1"/>
</dbReference>
<dbReference type="SUPFAM" id="SSF52743">
    <property type="entry name" value="Subtilisin-like"/>
    <property type="match status" value="1"/>
</dbReference>
<dbReference type="PROSITE" id="PS51695">
    <property type="entry name" value="SEDOLISIN"/>
    <property type="match status" value="1"/>
</dbReference>
<accession>Q0V8B6</accession>
<organism>
    <name type="scientific">Bos taurus</name>
    <name type="common">Bovine</name>
    <dbReference type="NCBI Taxonomy" id="9913"/>
    <lineage>
        <taxon>Eukaryota</taxon>
        <taxon>Metazoa</taxon>
        <taxon>Chordata</taxon>
        <taxon>Craniata</taxon>
        <taxon>Vertebrata</taxon>
        <taxon>Euteleostomi</taxon>
        <taxon>Mammalia</taxon>
        <taxon>Eutheria</taxon>
        <taxon>Laurasiatheria</taxon>
        <taxon>Artiodactyla</taxon>
        <taxon>Ruminantia</taxon>
        <taxon>Pecora</taxon>
        <taxon>Bovidae</taxon>
        <taxon>Bovinae</taxon>
        <taxon>Bos</taxon>
    </lineage>
</organism>
<comment type="function">
    <text evidence="2">Lysosomal serine protease with tripeptidyl-peptidase I activity. May act as a non-specific lysosomal peptidase which generates tripeptides from the breakdown products produced by lysosomal proteinases. Requires substrates with an unsubstituted N-terminus (By similarity).</text>
</comment>
<comment type="catalytic activity">
    <reaction>
        <text>Release of an N-terminal tripeptide from a polypeptide, but also has endopeptidase activity.</text>
        <dbReference type="EC" id="3.4.14.9"/>
    </reaction>
</comment>
<comment type="cofactor">
    <cofactor evidence="1">
        <name>Ca(2+)</name>
        <dbReference type="ChEBI" id="CHEBI:29108"/>
    </cofactor>
    <text evidence="1">Binds 1 Ca(2+) ion per subunit.</text>
</comment>
<comment type="subunit">
    <text evidence="1">Monomer. Interacts with CLN5. Interacts with CLN3 (By similarity).</text>
</comment>
<comment type="subcellular location">
    <subcellularLocation>
        <location evidence="1">Lysosome</location>
    </subcellularLocation>
    <subcellularLocation>
        <location evidence="1">Melanosome</location>
    </subcellularLocation>
</comment>
<comment type="PTM">
    <text evidence="1">Activated by autocatalytic proteolytical processing upon acidification. N-glycosylation is required for processing and activity (By similarity).</text>
</comment>
<feature type="signal peptide" evidence="1">
    <location>
        <begin position="1"/>
        <end position="19"/>
    </location>
</feature>
<feature type="propeptide" id="PRO_0000291586" description="Removed in mature form" evidence="1">
    <location>
        <begin position="20"/>
        <end position="195"/>
    </location>
</feature>
<feature type="chain" id="PRO_0000291587" description="Tripeptidyl-peptidase 1">
    <location>
        <begin position="196"/>
        <end position="563"/>
    </location>
</feature>
<feature type="domain" description="Peptidase S53">
    <location>
        <begin position="199"/>
        <end position="563"/>
    </location>
</feature>
<feature type="active site" description="Charge relay system" evidence="1">
    <location>
        <position position="272"/>
    </location>
</feature>
<feature type="active site" description="Charge relay system" evidence="1">
    <location>
        <position position="276"/>
    </location>
</feature>
<feature type="active site" description="Charge relay system" evidence="1">
    <location>
        <position position="475"/>
    </location>
</feature>
<feature type="binding site" evidence="1">
    <location>
        <position position="517"/>
    </location>
    <ligand>
        <name>Ca(2+)</name>
        <dbReference type="ChEBI" id="CHEBI:29108"/>
    </ligand>
</feature>
<feature type="binding site" evidence="1">
    <location>
        <position position="518"/>
    </location>
    <ligand>
        <name>Ca(2+)</name>
        <dbReference type="ChEBI" id="CHEBI:29108"/>
    </ligand>
</feature>
<feature type="binding site" evidence="1">
    <location>
        <position position="539"/>
    </location>
    <ligand>
        <name>Ca(2+)</name>
        <dbReference type="ChEBI" id="CHEBI:29108"/>
    </ligand>
</feature>
<feature type="binding site" evidence="1">
    <location>
        <position position="541"/>
    </location>
    <ligand>
        <name>Ca(2+)</name>
        <dbReference type="ChEBI" id="CHEBI:29108"/>
    </ligand>
</feature>
<feature type="binding site" evidence="1">
    <location>
        <position position="543"/>
    </location>
    <ligand>
        <name>Ca(2+)</name>
        <dbReference type="ChEBI" id="CHEBI:29108"/>
    </ligand>
</feature>
<feature type="glycosylation site" description="N-linked (GlcNAc...) asparagine" evidence="3">
    <location>
        <position position="210"/>
    </location>
</feature>
<feature type="glycosylation site" description="N-linked (GlcNAc...) asparagine" evidence="3">
    <location>
        <position position="222"/>
    </location>
</feature>
<feature type="glycosylation site" description="N-linked (GlcNAc...) asparagine" evidence="3">
    <location>
        <position position="286"/>
    </location>
</feature>
<feature type="glycosylation site" description="N-linked (GlcNAc...) asparagine" evidence="3">
    <location>
        <position position="313"/>
    </location>
</feature>
<feature type="glycosylation site" description="N-linked (GlcNAc...) asparagine" evidence="3">
    <location>
        <position position="443"/>
    </location>
</feature>
<feature type="disulfide bond" evidence="1">
    <location>
        <begin position="111"/>
        <end position="122"/>
    </location>
</feature>
<feature type="disulfide bond" evidence="1">
    <location>
        <begin position="365"/>
        <end position="526"/>
    </location>
</feature>
<feature type="disulfide bond" evidence="1">
    <location>
        <begin position="522"/>
        <end position="537"/>
    </location>
</feature>
<keyword id="KW-0068">Autocatalytic cleavage</keyword>
<keyword id="KW-0106">Calcium</keyword>
<keyword id="KW-1015">Disulfide bond</keyword>
<keyword id="KW-0325">Glycoprotein</keyword>
<keyword id="KW-0378">Hydrolase</keyword>
<keyword id="KW-0458">Lysosome</keyword>
<keyword id="KW-0479">Metal-binding</keyword>
<keyword id="KW-0645">Protease</keyword>
<keyword id="KW-1185">Reference proteome</keyword>
<keyword id="KW-0720">Serine protease</keyword>
<keyword id="KW-0732">Signal</keyword>
<keyword id="KW-0865">Zymogen</keyword>
<proteinExistence type="evidence at transcript level"/>